<dbReference type="EC" id="2.3.1.191" evidence="1"/>
<dbReference type="EMBL" id="AM233362">
    <property type="protein sequence ID" value="CAJ78637.1"/>
    <property type="molecule type" value="Genomic_DNA"/>
</dbReference>
<dbReference type="SMR" id="Q2A5L0"/>
<dbReference type="KEGG" id="ftl:FTL_0196"/>
<dbReference type="UniPathway" id="UPA00973"/>
<dbReference type="Proteomes" id="UP000001944">
    <property type="component" value="Chromosome"/>
</dbReference>
<dbReference type="GO" id="GO:0016020">
    <property type="term" value="C:membrane"/>
    <property type="evidence" value="ECO:0007669"/>
    <property type="project" value="GOC"/>
</dbReference>
<dbReference type="GO" id="GO:0016410">
    <property type="term" value="F:N-acyltransferase activity"/>
    <property type="evidence" value="ECO:0007669"/>
    <property type="project" value="InterPro"/>
</dbReference>
<dbReference type="GO" id="GO:0009245">
    <property type="term" value="P:lipid A biosynthetic process"/>
    <property type="evidence" value="ECO:0007669"/>
    <property type="project" value="UniProtKB-UniRule"/>
</dbReference>
<dbReference type="CDD" id="cd03352">
    <property type="entry name" value="LbH_LpxD"/>
    <property type="match status" value="1"/>
</dbReference>
<dbReference type="Gene3D" id="2.160.10.10">
    <property type="entry name" value="Hexapeptide repeat proteins"/>
    <property type="match status" value="1"/>
</dbReference>
<dbReference type="Gene3D" id="3.40.1390.10">
    <property type="entry name" value="MurE/MurF, N-terminal domain"/>
    <property type="match status" value="1"/>
</dbReference>
<dbReference type="HAMAP" id="MF_00523">
    <property type="entry name" value="LpxD"/>
    <property type="match status" value="1"/>
</dbReference>
<dbReference type="InterPro" id="IPR001451">
    <property type="entry name" value="Hexapep"/>
</dbReference>
<dbReference type="InterPro" id="IPR018357">
    <property type="entry name" value="Hexapep_transf_CS"/>
</dbReference>
<dbReference type="InterPro" id="IPR007691">
    <property type="entry name" value="LpxD"/>
</dbReference>
<dbReference type="InterPro" id="IPR011004">
    <property type="entry name" value="Trimer_LpxA-like_sf"/>
</dbReference>
<dbReference type="InterPro" id="IPR020573">
    <property type="entry name" value="UDP_GlcNAc_AcTrfase_non-rep"/>
</dbReference>
<dbReference type="NCBIfam" id="TIGR01853">
    <property type="entry name" value="lipid_A_lpxD"/>
    <property type="match status" value="1"/>
</dbReference>
<dbReference type="NCBIfam" id="NF002060">
    <property type="entry name" value="PRK00892.1"/>
    <property type="match status" value="1"/>
</dbReference>
<dbReference type="PANTHER" id="PTHR43378">
    <property type="entry name" value="UDP-3-O-ACYLGLUCOSAMINE N-ACYLTRANSFERASE"/>
    <property type="match status" value="1"/>
</dbReference>
<dbReference type="PANTHER" id="PTHR43378:SF2">
    <property type="entry name" value="UDP-3-O-ACYLGLUCOSAMINE N-ACYLTRANSFERASE 1, MITOCHONDRIAL-RELATED"/>
    <property type="match status" value="1"/>
</dbReference>
<dbReference type="Pfam" id="PF00132">
    <property type="entry name" value="Hexapep"/>
    <property type="match status" value="2"/>
</dbReference>
<dbReference type="Pfam" id="PF04613">
    <property type="entry name" value="LpxD"/>
    <property type="match status" value="1"/>
</dbReference>
<dbReference type="SUPFAM" id="SSF51161">
    <property type="entry name" value="Trimeric LpxA-like enzymes"/>
    <property type="match status" value="1"/>
</dbReference>
<dbReference type="PROSITE" id="PS00101">
    <property type="entry name" value="HEXAPEP_TRANSFERASES"/>
    <property type="match status" value="1"/>
</dbReference>
<evidence type="ECO:0000255" key="1">
    <source>
        <dbReference type="HAMAP-Rule" id="MF_00523"/>
    </source>
</evidence>
<feature type="chain" id="PRO_0000264368" description="UDP-3-O-acylglucosamine N-acyltransferase 1">
    <location>
        <begin position="1"/>
        <end position="347"/>
    </location>
</feature>
<feature type="active site" description="Proton acceptor" evidence="1">
    <location>
        <position position="246"/>
    </location>
</feature>
<name>LPXD1_FRATH</name>
<accession>Q2A5L0</accession>
<comment type="function">
    <text evidence="1">Catalyzes the N-acylation of UDP-3-O-acylglucosamine using 3-hydroxyacyl-ACP as the acyl donor. Is involved in the biosynthesis of lipid A, a phosphorylated glycolipid that anchors the lipopolysaccharide to the outer membrane of the cell.</text>
</comment>
<comment type="catalytic activity">
    <reaction evidence="1">
        <text>a UDP-3-O-[(3R)-3-hydroxyacyl]-alpha-D-glucosamine + a (3R)-hydroxyacyl-[ACP] = a UDP-2-N,3-O-bis[(3R)-3-hydroxyacyl]-alpha-D-glucosamine + holo-[ACP] + H(+)</text>
        <dbReference type="Rhea" id="RHEA:53836"/>
        <dbReference type="Rhea" id="RHEA-COMP:9685"/>
        <dbReference type="Rhea" id="RHEA-COMP:9945"/>
        <dbReference type="ChEBI" id="CHEBI:15378"/>
        <dbReference type="ChEBI" id="CHEBI:64479"/>
        <dbReference type="ChEBI" id="CHEBI:78827"/>
        <dbReference type="ChEBI" id="CHEBI:137740"/>
        <dbReference type="ChEBI" id="CHEBI:137748"/>
        <dbReference type="EC" id="2.3.1.191"/>
    </reaction>
</comment>
<comment type="pathway">
    <text evidence="1">Bacterial outer membrane biogenesis; LPS lipid A biosynthesis.</text>
</comment>
<comment type="subunit">
    <text evidence="1">Homotrimer.</text>
</comment>
<comment type="similarity">
    <text evidence="1">Belongs to the transferase hexapeptide repeat family. LpxD subfamily.</text>
</comment>
<gene>
    <name evidence="1" type="primary">lpxD1</name>
    <name type="ordered locus">FTL_0196</name>
</gene>
<sequence>MQYTLKQISEHLNAKVINEPSGEVIITGLNYAEQAKENDLTLIDKQEHIKLWQNSKAAAAIVSKKISKELAQVNDKPLIVVNNADLAMAKILELFSVPYPEQNGIHEKAVIDPTAKIGKNVSIGPGAYIGKNVEIGDNTIIYANVCIYNDAKVGTNCIIWPSVTIRDRTIIDHFCRLYSNCSIGSDGFGYRPSEDGRTIVRIPHIGNVVIGSFVDIGSNTCINNAKYGSTIIGDYTKIDNLVQIGHNVIIGKGCMICGQAGISGSVTIGDGVIIAGNAGIKDHTNIGSDARIGGKAGVMWDVPAGESHMGYPAYKDSELAKQWIAIRKLPETMKKLKAIAKSLNIDL</sequence>
<organism>
    <name type="scientific">Francisella tularensis subsp. holarctica (strain LVS)</name>
    <dbReference type="NCBI Taxonomy" id="376619"/>
    <lineage>
        <taxon>Bacteria</taxon>
        <taxon>Pseudomonadati</taxon>
        <taxon>Pseudomonadota</taxon>
        <taxon>Gammaproteobacteria</taxon>
        <taxon>Thiotrichales</taxon>
        <taxon>Francisellaceae</taxon>
        <taxon>Francisella</taxon>
    </lineage>
</organism>
<keyword id="KW-0012">Acyltransferase</keyword>
<keyword id="KW-0441">Lipid A biosynthesis</keyword>
<keyword id="KW-0444">Lipid biosynthesis</keyword>
<keyword id="KW-0443">Lipid metabolism</keyword>
<keyword id="KW-1185">Reference proteome</keyword>
<keyword id="KW-0677">Repeat</keyword>
<keyword id="KW-0808">Transferase</keyword>
<proteinExistence type="inferred from homology"/>
<protein>
    <recommendedName>
        <fullName evidence="1">UDP-3-O-acylglucosamine N-acyltransferase 1</fullName>
        <ecNumber evidence="1">2.3.1.191</ecNumber>
    </recommendedName>
</protein>
<reference key="1">
    <citation type="submission" date="2006-03" db="EMBL/GenBank/DDBJ databases">
        <title>Complete genome sequence of Francisella tularensis LVS (Live Vaccine Strain).</title>
        <authorList>
            <person name="Chain P."/>
            <person name="Larimer F."/>
            <person name="Land M."/>
            <person name="Stilwagen S."/>
            <person name="Larsson P."/>
            <person name="Bearden S."/>
            <person name="Chu M."/>
            <person name="Oyston P."/>
            <person name="Forsman M."/>
            <person name="Andersson S."/>
            <person name="Lindler L."/>
            <person name="Titball R."/>
            <person name="Garcia E."/>
        </authorList>
    </citation>
    <scope>NUCLEOTIDE SEQUENCE [LARGE SCALE GENOMIC DNA]</scope>
    <source>
        <strain>LVS</strain>
    </source>
</reference>